<feature type="chain" id="PRO_0000279857" description="Multidrug resistance protein MdtK">
    <location>
        <begin position="1"/>
        <end position="457"/>
    </location>
</feature>
<feature type="transmembrane region" description="Helical" evidence="1">
    <location>
        <begin position="11"/>
        <end position="31"/>
    </location>
</feature>
<feature type="transmembrane region" description="Helical" evidence="1">
    <location>
        <begin position="46"/>
        <end position="66"/>
    </location>
</feature>
<feature type="transmembrane region" description="Helical" evidence="1">
    <location>
        <begin position="93"/>
        <end position="113"/>
    </location>
</feature>
<feature type="transmembrane region" description="Helical" evidence="1">
    <location>
        <begin position="127"/>
        <end position="147"/>
    </location>
</feature>
<feature type="transmembrane region" description="Helical" evidence="1">
    <location>
        <begin position="160"/>
        <end position="180"/>
    </location>
</feature>
<feature type="transmembrane region" description="Helical" evidence="1">
    <location>
        <begin position="188"/>
        <end position="208"/>
    </location>
</feature>
<feature type="transmembrane region" description="Helical" evidence="1">
    <location>
        <begin position="243"/>
        <end position="263"/>
    </location>
</feature>
<feature type="transmembrane region" description="Helical" evidence="1">
    <location>
        <begin position="283"/>
        <end position="301"/>
    </location>
</feature>
<feature type="transmembrane region" description="Helical" evidence="1">
    <location>
        <begin position="316"/>
        <end position="336"/>
    </location>
</feature>
<feature type="transmembrane region" description="Helical" evidence="1">
    <location>
        <begin position="357"/>
        <end position="377"/>
    </location>
</feature>
<feature type="transmembrane region" description="Helical" evidence="1">
    <location>
        <begin position="387"/>
        <end position="407"/>
    </location>
</feature>
<feature type="transmembrane region" description="Helical" evidence="1">
    <location>
        <begin position="418"/>
        <end position="438"/>
    </location>
</feature>
<evidence type="ECO:0000255" key="1">
    <source>
        <dbReference type="HAMAP-Rule" id="MF_00400"/>
    </source>
</evidence>
<comment type="function">
    <text evidence="1">Multidrug efflux pump that functions probably as a Na(+)/drug antiporter.</text>
</comment>
<comment type="subcellular location">
    <subcellularLocation>
        <location evidence="1">Cell inner membrane</location>
        <topology evidence="1">Multi-pass membrane protein</topology>
    </subcellularLocation>
</comment>
<comment type="similarity">
    <text evidence="1">Belongs to the multi antimicrobial extrusion (MATE) (TC 2.A.66.1) family. MdtK subfamily.</text>
</comment>
<proteinExistence type="inferred from homology"/>
<protein>
    <recommendedName>
        <fullName evidence="1">Multidrug resistance protein MdtK</fullName>
    </recommendedName>
    <alternativeName>
        <fullName evidence="1">Multidrug-efflux transporter</fullName>
    </alternativeName>
</protein>
<accession>Q1CIK5</accession>
<accession>C4GTF0</accession>
<keyword id="KW-0050">Antiport</keyword>
<keyword id="KW-0997">Cell inner membrane</keyword>
<keyword id="KW-1003">Cell membrane</keyword>
<keyword id="KW-0406">Ion transport</keyword>
<keyword id="KW-0472">Membrane</keyword>
<keyword id="KW-0915">Sodium</keyword>
<keyword id="KW-0739">Sodium transport</keyword>
<keyword id="KW-0812">Transmembrane</keyword>
<keyword id="KW-1133">Transmembrane helix</keyword>
<keyword id="KW-0813">Transport</keyword>
<gene>
    <name evidence="1" type="primary">mdtK</name>
    <name type="ordered locus">YPN_1846</name>
    <name type="ORF">YP516_2051</name>
</gene>
<organism>
    <name type="scientific">Yersinia pestis bv. Antiqua (strain Nepal516)</name>
    <dbReference type="NCBI Taxonomy" id="377628"/>
    <lineage>
        <taxon>Bacteria</taxon>
        <taxon>Pseudomonadati</taxon>
        <taxon>Pseudomonadota</taxon>
        <taxon>Gammaproteobacteria</taxon>
        <taxon>Enterobacterales</taxon>
        <taxon>Yersiniaceae</taxon>
        <taxon>Yersinia</taxon>
    </lineage>
</organism>
<sequence>MQKYIVEARSLLALAIPVVIAQLSQTAMGVVDTIMAGSVSATDMAAVAVGTSIWLPAILFGHGLLLALTPTVAQLNGSGRRSQIAHQVRQGFWLALCVSVLIMLVLYNSDHVIKQMDNIDPVLAQKAVGFLHAIMWGVPGYLFFQVLRNQCEGLSKTKPGMVIGFVGLLVNIPINYIFIYGKFGAPALGGVGCGVATASVYWVMFLMMRWYVTRARSQQDIKLEKGFAAPDWQVMKRLSGLGLPVALALFFEVTLFAVVALLVSPLGIVAVAGHQIALNFSSLMFMLPMSLSVAATIRVGFRLGQGAVEQAQVAAYTSMAVGLLLASVTAVFTIVFREHIALLYNKTPEVVTMASHLMLLAALYQLSDAVQVIGSGVLRGYKDTRSIFFITFTAYWLLGLPSGYLLGLTDYILPAMGPAGFWIGFIIGLTAAAILMVLRIRWLQKQPTAFILQRAAH</sequence>
<reference key="1">
    <citation type="journal article" date="2006" name="J. Bacteriol.">
        <title>Complete genome sequence of Yersinia pestis strains Antiqua and Nepal516: evidence of gene reduction in an emerging pathogen.</title>
        <authorList>
            <person name="Chain P.S.G."/>
            <person name="Hu P."/>
            <person name="Malfatti S.A."/>
            <person name="Radnedge L."/>
            <person name="Larimer F."/>
            <person name="Vergez L.M."/>
            <person name="Worsham P."/>
            <person name="Chu M.C."/>
            <person name="Andersen G.L."/>
        </authorList>
    </citation>
    <scope>NUCLEOTIDE SEQUENCE [LARGE SCALE GENOMIC DNA]</scope>
    <source>
        <strain>Nepal516</strain>
    </source>
</reference>
<reference key="2">
    <citation type="submission" date="2009-04" db="EMBL/GenBank/DDBJ databases">
        <title>Yersinia pestis Nepal516A whole genome shotgun sequencing project.</title>
        <authorList>
            <person name="Plunkett G. III"/>
            <person name="Anderson B.D."/>
            <person name="Baumler D.J."/>
            <person name="Burland V."/>
            <person name="Cabot E.L."/>
            <person name="Glasner J.D."/>
            <person name="Mau B."/>
            <person name="Neeno-Eckwall E."/>
            <person name="Perna N.T."/>
            <person name="Munk A.C."/>
            <person name="Tapia R."/>
            <person name="Green L.D."/>
            <person name="Rogers Y.C."/>
            <person name="Detter J.C."/>
            <person name="Bruce D.C."/>
            <person name="Brettin T.S."/>
        </authorList>
    </citation>
    <scope>NUCLEOTIDE SEQUENCE [LARGE SCALE GENOMIC DNA]</scope>
    <source>
        <strain>Nepal516</strain>
    </source>
</reference>
<dbReference type="EMBL" id="CP000305">
    <property type="protein sequence ID" value="ABG18175.1"/>
    <property type="molecule type" value="Genomic_DNA"/>
</dbReference>
<dbReference type="EMBL" id="ACNQ01000010">
    <property type="protein sequence ID" value="EEO76751.1"/>
    <property type="molecule type" value="Genomic_DNA"/>
</dbReference>
<dbReference type="RefSeq" id="WP_002210937.1">
    <property type="nucleotide sequence ID" value="NZ_ACNQ01000010.1"/>
</dbReference>
<dbReference type="SMR" id="Q1CIK5"/>
<dbReference type="KEGG" id="ypn:YPN_1846"/>
<dbReference type="HOGENOM" id="CLU_012893_6_0_6"/>
<dbReference type="Proteomes" id="UP000008936">
    <property type="component" value="Chromosome"/>
</dbReference>
<dbReference type="GO" id="GO:0005886">
    <property type="term" value="C:plasma membrane"/>
    <property type="evidence" value="ECO:0007669"/>
    <property type="project" value="UniProtKB-SubCell"/>
</dbReference>
<dbReference type="GO" id="GO:0015297">
    <property type="term" value="F:antiporter activity"/>
    <property type="evidence" value="ECO:0007669"/>
    <property type="project" value="UniProtKB-UniRule"/>
</dbReference>
<dbReference type="GO" id="GO:0042910">
    <property type="term" value="F:xenobiotic transmembrane transporter activity"/>
    <property type="evidence" value="ECO:0007669"/>
    <property type="project" value="UniProtKB-UniRule"/>
</dbReference>
<dbReference type="GO" id="GO:0006814">
    <property type="term" value="P:sodium ion transport"/>
    <property type="evidence" value="ECO:0007669"/>
    <property type="project" value="UniProtKB-UniRule"/>
</dbReference>
<dbReference type="GO" id="GO:0006855">
    <property type="term" value="P:xenobiotic transmembrane transport"/>
    <property type="evidence" value="ECO:0007669"/>
    <property type="project" value="UniProtKB-UniRule"/>
</dbReference>
<dbReference type="CDD" id="cd13131">
    <property type="entry name" value="MATE_NorM_like"/>
    <property type="match status" value="1"/>
</dbReference>
<dbReference type="HAMAP" id="MF_00400">
    <property type="entry name" value="MdtK"/>
    <property type="match status" value="1"/>
</dbReference>
<dbReference type="InterPro" id="IPR002528">
    <property type="entry name" value="MATE_fam"/>
</dbReference>
<dbReference type="InterPro" id="IPR050222">
    <property type="entry name" value="MATE_MdtK"/>
</dbReference>
<dbReference type="InterPro" id="IPR048279">
    <property type="entry name" value="MdtK-like"/>
</dbReference>
<dbReference type="InterPro" id="IPR022913">
    <property type="entry name" value="Multidrug-R_MdtK"/>
</dbReference>
<dbReference type="NCBIfam" id="TIGR00797">
    <property type="entry name" value="matE"/>
    <property type="match status" value="1"/>
</dbReference>
<dbReference type="PANTHER" id="PTHR43298:SF2">
    <property type="entry name" value="FMN_FAD EXPORTER YEEO-RELATED"/>
    <property type="match status" value="1"/>
</dbReference>
<dbReference type="PANTHER" id="PTHR43298">
    <property type="entry name" value="MULTIDRUG RESISTANCE PROTEIN NORM-RELATED"/>
    <property type="match status" value="1"/>
</dbReference>
<dbReference type="Pfam" id="PF01554">
    <property type="entry name" value="MatE"/>
    <property type="match status" value="2"/>
</dbReference>
<dbReference type="PIRSF" id="PIRSF006603">
    <property type="entry name" value="DinF"/>
    <property type="match status" value="1"/>
</dbReference>
<name>MDTK_YERPN</name>